<sequence length="432" mass="48457">MQRTCVLIVLIVTSTMWTPDPDVYAQPRGFNYDEAQVPKYTLPDPLVMVDGTKVTSAKQWNDKRRDEVQQLFEAYMYGKVPDGETELIFTDAKGERALGGAAIRKQVKISFGEKEDAPAMDLLIYLPADAKVRVPVFLGLNFHGNHTIHKDKEIWLTESWVRTNKKFGITKNKANELSRGVAAGRWQIEKAIAKGYGVATIYCGDIDPDFNFPSNGIQAYYYKKDQTIPEKGQWGTIAAWAFGLSCAMDYFETDTDIDHKKVAVLGHSRLGKTSLWAGAIDTRFALTISNCSGCGGAALSRRRFGETVRRINTSFPHWFCSRFHQYNDKEDKLPIDQHMLIALCAPRPVLINSATEDKWADPHGEFLAAQGADAVYRMLGTGGLDAKKWPEPNKLVKSTIGYHLRPGKHDVTARDWDVYIEFADHHMTGGAE</sequence>
<dbReference type="EC" id="3.1.1.-" evidence="3"/>
<dbReference type="EMBL" id="LM651246">
    <property type="protein sequence ID" value="CDW92038.1"/>
    <property type="molecule type" value="Genomic_DNA"/>
</dbReference>
<dbReference type="PDB" id="6EHN">
    <property type="method" value="X-ray"/>
    <property type="resolution" value="1.90 A"/>
    <property type="chains" value="A=29-427"/>
</dbReference>
<dbReference type="PDBsum" id="6EHN"/>
<dbReference type="SMR" id="A0A0K2VM55"/>
<dbReference type="ESTHER" id="unkp-CE15">
    <property type="family name" value="Glucuronoyl_esterase"/>
</dbReference>
<dbReference type="GO" id="GO:0042597">
    <property type="term" value="C:periplasmic space"/>
    <property type="evidence" value="ECO:0007669"/>
    <property type="project" value="UniProtKB-SubCell"/>
</dbReference>
<dbReference type="GO" id="GO:0052689">
    <property type="term" value="F:carboxylic ester hydrolase activity"/>
    <property type="evidence" value="ECO:0000314"/>
    <property type="project" value="UniProtKB"/>
</dbReference>
<dbReference type="GO" id="GO:0000272">
    <property type="term" value="P:polysaccharide catabolic process"/>
    <property type="evidence" value="ECO:0007669"/>
    <property type="project" value="UniProtKB-KW"/>
</dbReference>
<dbReference type="Gene3D" id="3.40.50.1820">
    <property type="entry name" value="alpha/beta hydrolase"/>
    <property type="match status" value="1"/>
</dbReference>
<dbReference type="InterPro" id="IPR029058">
    <property type="entry name" value="AB_hydrolase_fold"/>
</dbReference>
<dbReference type="InterPro" id="IPR054579">
    <property type="entry name" value="GCE-like_dom"/>
</dbReference>
<dbReference type="Pfam" id="PF22244">
    <property type="entry name" value="GCE_fung"/>
    <property type="match status" value="1"/>
</dbReference>
<dbReference type="SUPFAM" id="SSF53474">
    <property type="entry name" value="alpha/beta-Hydrolases"/>
    <property type="match status" value="1"/>
</dbReference>
<proteinExistence type="evidence at protein level"/>
<feature type="signal peptide" evidence="2">
    <location>
        <begin position="1"/>
        <end position="25"/>
    </location>
</feature>
<feature type="chain" id="PRO_0000439191" description="Carbohydrate esterase MZ0003">
    <location>
        <begin position="26"/>
        <end position="432"/>
    </location>
</feature>
<feature type="short sequence motif" description="GXSYXG catalytic site motif" evidence="1">
    <location>
        <begin position="266"/>
        <end position="271"/>
    </location>
</feature>
<feature type="active site" description="Nucleophile" evidence="4">
    <location>
        <position position="268"/>
    </location>
</feature>
<feature type="active site" description="Charge relay system" evidence="4">
    <location>
        <position position="409"/>
    </location>
</feature>
<feature type="binding site" evidence="1">
    <location>
        <position position="272"/>
    </location>
    <ligand>
        <name>substrate</name>
    </ligand>
</feature>
<feature type="binding site" evidence="1">
    <location>
        <position position="359"/>
    </location>
    <ligand>
        <name>substrate</name>
    </ligand>
</feature>
<feature type="mutagenesis site" description="No effect on esterase activity." evidence="3">
    <original>KE</original>
    <variation>AA</variation>
    <location>
        <begin position="152"/>
        <end position="153"/>
    </location>
</feature>
<feature type="mutagenesis site" description="Loss of esterase activity." evidence="3">
    <original>S</original>
    <variation>A</variation>
    <location>
        <position position="268"/>
    </location>
</feature>
<feature type="mutagenesis site" description="No effect on esterase activity." evidence="3">
    <original>C</original>
    <variation>A</variation>
    <location>
        <position position="291"/>
    </location>
</feature>
<feature type="mutagenesis site" description="Loss of esterase activity." evidence="3">
    <original>H</original>
    <variation>A</variation>
    <location>
        <position position="409"/>
    </location>
</feature>
<feature type="helix" evidence="6">
    <location>
        <begin position="34"/>
        <end position="36"/>
    </location>
</feature>
<feature type="helix" evidence="6">
    <location>
        <begin position="57"/>
        <end position="62"/>
    </location>
</feature>
<feature type="helix" evidence="6">
    <location>
        <begin position="64"/>
        <end position="75"/>
    </location>
</feature>
<feature type="strand" evidence="6">
    <location>
        <begin position="87"/>
        <end position="89"/>
    </location>
</feature>
<feature type="strand" evidence="6">
    <location>
        <begin position="95"/>
        <end position="97"/>
    </location>
</feature>
<feature type="helix" evidence="6">
    <location>
        <begin position="98"/>
        <end position="100"/>
    </location>
</feature>
<feature type="strand" evidence="6">
    <location>
        <begin position="102"/>
        <end position="114"/>
    </location>
</feature>
<feature type="strand" evidence="6">
    <location>
        <begin position="119"/>
        <end position="127"/>
    </location>
</feature>
<feature type="strand" evidence="6">
    <location>
        <begin position="134"/>
        <end position="143"/>
    </location>
</feature>
<feature type="helix" evidence="6">
    <location>
        <begin position="145"/>
        <end position="147"/>
    </location>
</feature>
<feature type="turn" evidence="6">
    <location>
        <begin position="165"/>
        <end position="168"/>
    </location>
</feature>
<feature type="strand" evidence="6">
    <location>
        <begin position="171"/>
        <end position="173"/>
    </location>
</feature>
<feature type="helix" evidence="6">
    <location>
        <begin position="176"/>
        <end position="178"/>
    </location>
</feature>
<feature type="turn" evidence="6">
    <location>
        <begin position="179"/>
        <end position="182"/>
    </location>
</feature>
<feature type="helix" evidence="6">
    <location>
        <begin position="183"/>
        <end position="185"/>
    </location>
</feature>
<feature type="helix" evidence="6">
    <location>
        <begin position="188"/>
        <end position="193"/>
    </location>
</feature>
<feature type="strand" evidence="6">
    <location>
        <begin position="197"/>
        <end position="202"/>
    </location>
</feature>
<feature type="helix" evidence="6">
    <location>
        <begin position="203"/>
        <end position="206"/>
    </location>
</feature>
<feature type="helix" evidence="6">
    <location>
        <begin position="217"/>
        <end position="222"/>
    </location>
</feature>
<feature type="helix" evidence="6">
    <location>
        <begin position="230"/>
        <end position="232"/>
    </location>
</feature>
<feature type="helix" evidence="6">
    <location>
        <begin position="236"/>
        <end position="253"/>
    </location>
</feature>
<feature type="strand" evidence="6">
    <location>
        <begin position="257"/>
        <end position="265"/>
    </location>
</feature>
<feature type="helix" evidence="6">
    <location>
        <begin position="269"/>
        <end position="280"/>
    </location>
</feature>
<feature type="strand" evidence="6">
    <location>
        <begin position="285"/>
        <end position="291"/>
    </location>
</feature>
<feature type="turn" evidence="6">
    <location>
        <begin position="294"/>
        <end position="297"/>
    </location>
</feature>
<feature type="helix" evidence="6">
    <location>
        <begin position="300"/>
        <end position="302"/>
    </location>
</feature>
<feature type="helix" evidence="6">
    <location>
        <begin position="308"/>
        <end position="314"/>
    </location>
</feature>
<feature type="helix" evidence="6">
    <location>
        <begin position="321"/>
        <end position="326"/>
    </location>
</feature>
<feature type="helix" evidence="6">
    <location>
        <begin position="330"/>
        <end position="332"/>
    </location>
</feature>
<feature type="helix" evidence="6">
    <location>
        <begin position="337"/>
        <end position="343"/>
    </location>
</feature>
<feature type="turn" evidence="6">
    <location>
        <begin position="344"/>
        <end position="346"/>
    </location>
</feature>
<feature type="strand" evidence="6">
    <location>
        <begin position="349"/>
        <end position="354"/>
    </location>
</feature>
<feature type="helix" evidence="6">
    <location>
        <begin position="358"/>
        <end position="360"/>
    </location>
</feature>
<feature type="helix" evidence="6">
    <location>
        <begin position="362"/>
        <end position="371"/>
    </location>
</feature>
<feature type="helix" evidence="6">
    <location>
        <begin position="373"/>
        <end position="378"/>
    </location>
</feature>
<feature type="strand" evidence="6">
    <location>
        <begin position="398"/>
        <end position="407"/>
    </location>
</feature>
<feature type="helix" evidence="6">
    <location>
        <begin position="413"/>
        <end position="426"/>
    </location>
</feature>
<name>CE15_UNKP</name>
<gene>
    <name evidence="5" type="primary">MZ0003</name>
</gene>
<organism>
    <name type="scientific">Unknown prokaryotic organism</name>
    <dbReference type="NCBI Taxonomy" id="2725"/>
    <lineage>
        <taxon>Bacteria</taxon>
        <taxon>environmental samples</taxon>
    </lineage>
</organism>
<reference key="1">
    <citation type="submission" date="2014-06" db="EMBL/GenBank/DDBJ databases">
        <title>Three species of the Botryosphaeriales overlap on five unrelated trees in China, with a novel species.</title>
        <authorList>
            <person name="Tian C."/>
            <person name="Fan X."/>
        </authorList>
    </citation>
    <scope>NUCLEOTIDE SEQUENCE [GENOMIC DNA]</scope>
</reference>
<reference key="2">
    <citation type="journal article" date="2016" name="PLoS ONE">
        <title>Biochemical characterization of a family 15 carbohydrate esterase from a bacterial marine arctic metagenome.</title>
        <authorList>
            <person name="De Santi C."/>
            <person name="Willassen N.P."/>
            <person name="Williamson A."/>
        </authorList>
    </citation>
    <scope>FUNCTION</scope>
    <scope>ESTERASE ACTIVITY</scope>
    <scope>BIOPHYSICOCHEMICAL PROPERTIES</scope>
    <scope>SUBSTRATE SPECIFICITY</scope>
    <scope>COFACTOR</scope>
    <scope>ACTIVITY REGULATION</scope>
    <scope>SUBCELLULAR LOCATION</scope>
    <scope>3D-STRUCTURE MODELING</scope>
    <scope>MUTAGENESIS OF 152-LYS-GLU-153; SER-268; CYS-291 AND HIS-409</scope>
    <scope>ACTIVE SITE</scope>
</reference>
<accession>A0A0K2VM55</accession>
<comment type="function">
    <text evidence="3">Displays some glucuronoyl esterase activity in vitro, since it is able to hydrolyze methyl 4-O-methyl-D-glucopyranosyluronate, allyl D-glucuronate, benzyl D-glucuronate and D-glucuronic acid methyl ester. However, esters of glucuronic acid are probably not its biological substrate, as they are not present in the marine environment. Can also hydrolyze a range of other esters, including p-nitrophenyl acetate. More likely biologically-relevant substrates for MZ0003 and other marine bacterial CE15s are algal cell wall polysaccharides, as these would be readily available in this environment and could be used as energy sources.</text>
</comment>
<comment type="cofactor">
    <text evidence="3">Does not require metal ions for activity.</text>
</comment>
<comment type="activity regulation">
    <text evidence="3">Is inhibited by PMSF and by NaF in vitro, which is consistent with the catalytic nucleophile being a serine.</text>
</comment>
<comment type="biophysicochemical properties">
    <kinetics>
        <KM evidence="3">0.71 mM for p-nitrophenyl acetate (in the absence of NaCl)</KM>
        <KM evidence="3">0.97 mM for p-nitrophenyl acetate (in the presence of 1M NaCl)</KM>
        <text evidence="3">kcat is 8.9 sec(-1) with p-nitrophenyl acetate as substrate (in the absence of NaCl). kcat is 12.78 sec(-1) with p-nitrophenyl acetate as substrate (in the presence of 1M NaCl).</text>
    </kinetics>
    <phDependence>
        <text evidence="3">Optimum pH is 8.0. Shows more than 60% of its maximum activity in the pH range of 7.0-9.5. 20% of the activity is retained at low pH range and at pH 10.5, while no catalytic activity is found at pH 5.0 or 10.5.</text>
    </phDependence>
    <temperatureDependence>
        <text evidence="3">Optimum temperature is 35 degrees Celsius with p-nitrophenyl acetate as substrate. Above 35 degrees Celsius, activity significantly decreases, while 30% of the maximum activity is recorded at 10 degrees Celsius.</text>
    </temperatureDependence>
</comment>
<comment type="subcellular location">
    <subcellularLocation>
        <location evidence="4">Periplasm</location>
    </subcellularLocation>
</comment>
<comment type="similarity">
    <text evidence="4">Belongs to the carbohydrate esterase 15 (CE15) family.</text>
</comment>
<evidence type="ECO:0000250" key="1">
    <source>
        <dbReference type="UniProtKB" id="G2QJR6"/>
    </source>
</evidence>
<evidence type="ECO:0000255" key="2"/>
<evidence type="ECO:0000269" key="3">
    <source>
    </source>
</evidence>
<evidence type="ECO:0000305" key="4">
    <source>
    </source>
</evidence>
<evidence type="ECO:0000312" key="5">
    <source>
        <dbReference type="EMBL" id="CDW92038.1"/>
    </source>
</evidence>
<evidence type="ECO:0007829" key="6">
    <source>
        <dbReference type="PDB" id="6EHN"/>
    </source>
</evidence>
<protein>
    <recommendedName>
        <fullName evidence="4">Carbohydrate esterase MZ0003</fullName>
        <ecNumber evidence="3">3.1.1.-</ecNumber>
    </recommendedName>
</protein>
<keyword id="KW-0002">3D-structure</keyword>
<keyword id="KW-0119">Carbohydrate metabolism</keyword>
<keyword id="KW-0378">Hydrolase</keyword>
<keyword id="KW-0574">Periplasm</keyword>
<keyword id="KW-0624">Polysaccharide degradation</keyword>
<keyword id="KW-0719">Serine esterase</keyword>
<keyword id="KW-0732">Signal</keyword>